<reference key="1">
    <citation type="submission" date="1995-12" db="EMBL/GenBank/DDBJ databases">
        <authorList>
            <person name="Tanaka Y."/>
        </authorList>
    </citation>
    <scope>NUCLEOTIDE SEQUENCE [MRNA]</scope>
    <source>
        <strain>cv. Beniazuma</strain>
        <tissue>Root</tissue>
    </source>
</reference>
<proteinExistence type="evidence at transcript level"/>
<name>PAL2_IPOBA</name>
<feature type="chain" id="PRO_0000215394" description="Phenylalanine ammonia-lyase">
    <location>
        <begin position="1"/>
        <end position="708"/>
    </location>
</feature>
<feature type="active site" description="Proton donor/acceptor" evidence="3">
    <location>
        <position position="100"/>
    </location>
</feature>
<feature type="binding site" evidence="3">
    <location>
        <position position="252"/>
    </location>
    <ligand>
        <name>(E)-cinnamate</name>
        <dbReference type="ChEBI" id="CHEBI:15669"/>
    </ligand>
</feature>
<feature type="binding site" evidence="3">
    <location>
        <position position="340"/>
    </location>
    <ligand>
        <name>(E)-cinnamate</name>
        <dbReference type="ChEBI" id="CHEBI:15669"/>
    </ligand>
</feature>
<feature type="binding site" evidence="3">
    <location>
        <position position="346"/>
    </location>
    <ligand>
        <name>(E)-cinnamate</name>
        <dbReference type="ChEBI" id="CHEBI:15669"/>
    </ligand>
</feature>
<feature type="binding site" evidence="3">
    <location>
        <position position="376"/>
    </location>
    <ligand>
        <name>(E)-cinnamate</name>
        <dbReference type="ChEBI" id="CHEBI:15669"/>
    </ligand>
</feature>
<feature type="binding site" evidence="1">
    <location>
        <position position="448"/>
    </location>
    <ligand>
        <name>(E)-cinnamate</name>
        <dbReference type="ChEBI" id="CHEBI:15669"/>
    </ligand>
</feature>
<feature type="binding site" evidence="1">
    <location>
        <position position="476"/>
    </location>
    <ligand>
        <name>(E)-cinnamate</name>
        <dbReference type="ChEBI" id="CHEBI:15669"/>
    </ligand>
</feature>
<feature type="binding site" evidence="3">
    <location>
        <position position="479"/>
    </location>
    <ligand>
        <name>(E)-cinnamate</name>
        <dbReference type="ChEBI" id="CHEBI:15669"/>
    </ligand>
</feature>
<feature type="modified residue" description="2,3-didehydroalanine (Ser)" evidence="4">
    <location>
        <position position="195"/>
    </location>
</feature>
<feature type="cross-link" description="5-imidazolinone (Ala-Gly)" evidence="3">
    <location>
        <begin position="194"/>
        <end position="196"/>
    </location>
</feature>
<sequence>MEGAIANGHTNDFCIKVDPLNWEMAADSLKGSHLDEVKRMVAEFRNPAVKIGGQTLTSLRSPPIAARDNASKWSSPRLPARRESSSDWVMNSMNNGTDSYGVTTGFGATSHRRTKNGHALQQELIRFLNAGIFGTGTGASHTLPHSATRAAMLVRINTLLQGYSGIRFEILEAITKLLNHNITPCLPLRGTITASGDLVPLSYIAGLLTGRPNSKAVGPNGEALTAEEAFKLAGVQGGFFELQPKEGLALVNGTAVGSGMASMVLFEANVLAVLSEVLSAIFAEVMNGKPEFTDHLTHKLKHHPGQIEAAAIMEHILDRSYYMKAAQKLHEMDPLQKPKQDRYALRTSPQWLGPQIEVIRQATKMIEREINSVNDNPLIDVSRNKALHGGNFQGTPIGVSMDNSRLALASIGKLIFAQFSELVNDYYNNGLPSNLTAGRNPSLDYGFKGVEIAMASYCSELQFLANPVTNHVQSAEQHNQDVNSLGLISARKTAEAVDVLKLMSSTYLVALCQAIDLRHLEENLKNAVRNTVNQVAKRTLTMGVNGELHPSRFCEKDLLRVVDREYVFAYADDPCSANYPLFQKLRQVLVDHALQNGEHEKNVSTSIFQKIAAFEDELKAVLPKEVEGARSAIENGNPAIPNRITECRSYPLYKFVREELGTEMLTGEKVKSPGEVCDKVFTAVCDGGIIDPLLECLKSWDGAPLPIC</sequence>
<dbReference type="EC" id="4.3.1.24" evidence="2"/>
<dbReference type="EMBL" id="D78640">
    <property type="protein sequence ID" value="BAA11459.1"/>
    <property type="molecule type" value="mRNA"/>
</dbReference>
<dbReference type="PIR" id="T10909">
    <property type="entry name" value="T10909"/>
</dbReference>
<dbReference type="SMR" id="Q42858"/>
<dbReference type="UniPathway" id="UPA00713">
    <property type="reaction ID" value="UER00725"/>
</dbReference>
<dbReference type="GO" id="GO:0005737">
    <property type="term" value="C:cytoplasm"/>
    <property type="evidence" value="ECO:0007669"/>
    <property type="project" value="UniProtKB-SubCell"/>
</dbReference>
<dbReference type="GO" id="GO:0045548">
    <property type="term" value="F:phenylalanine ammonia-lyase activity"/>
    <property type="evidence" value="ECO:0007669"/>
    <property type="project" value="UniProtKB-EC"/>
</dbReference>
<dbReference type="GO" id="GO:0009800">
    <property type="term" value="P:cinnamic acid biosynthetic process"/>
    <property type="evidence" value="ECO:0007669"/>
    <property type="project" value="UniProtKB-UniPathway"/>
</dbReference>
<dbReference type="GO" id="GO:0006559">
    <property type="term" value="P:L-phenylalanine catabolic process"/>
    <property type="evidence" value="ECO:0007669"/>
    <property type="project" value="UniProtKB-KW"/>
</dbReference>
<dbReference type="CDD" id="cd00332">
    <property type="entry name" value="PAL-HAL"/>
    <property type="match status" value="1"/>
</dbReference>
<dbReference type="FunFam" id="1.10.274.20:FF:000001">
    <property type="entry name" value="Phenylalanine ammonia-lyase"/>
    <property type="match status" value="1"/>
</dbReference>
<dbReference type="FunFam" id="1.10.275.10:FF:000009">
    <property type="entry name" value="Phenylalanine ammonia-lyase"/>
    <property type="match status" value="1"/>
</dbReference>
<dbReference type="FunFam" id="1.20.200.10:FF:000009">
    <property type="entry name" value="Phenylalanine ammonia-lyase"/>
    <property type="match status" value="1"/>
</dbReference>
<dbReference type="Gene3D" id="1.20.200.10">
    <property type="entry name" value="Fumarase/aspartase (Central domain)"/>
    <property type="match status" value="1"/>
</dbReference>
<dbReference type="Gene3D" id="1.10.275.10">
    <property type="entry name" value="Fumarase/aspartase (N-terminal domain)"/>
    <property type="match status" value="1"/>
</dbReference>
<dbReference type="Gene3D" id="1.10.274.20">
    <property type="entry name" value="Phenylalanine ammonia-lyase 1, domain 3"/>
    <property type="match status" value="1"/>
</dbReference>
<dbReference type="InterPro" id="IPR001106">
    <property type="entry name" value="Aromatic_Lyase"/>
</dbReference>
<dbReference type="InterPro" id="IPR024083">
    <property type="entry name" value="Fumarase/histidase_N"/>
</dbReference>
<dbReference type="InterPro" id="IPR008948">
    <property type="entry name" value="L-Aspartase-like"/>
</dbReference>
<dbReference type="InterPro" id="IPR022313">
    <property type="entry name" value="Phe/His_NH3-lyase_AS"/>
</dbReference>
<dbReference type="InterPro" id="IPR005922">
    <property type="entry name" value="Phe_NH3-lyase"/>
</dbReference>
<dbReference type="InterPro" id="IPR023144">
    <property type="entry name" value="Phe_NH3-lyase_shielding_dom_sf"/>
</dbReference>
<dbReference type="NCBIfam" id="TIGR01226">
    <property type="entry name" value="phe_am_lyase"/>
    <property type="match status" value="1"/>
</dbReference>
<dbReference type="PANTHER" id="PTHR10362">
    <property type="entry name" value="HISTIDINE AMMONIA-LYASE"/>
    <property type="match status" value="1"/>
</dbReference>
<dbReference type="Pfam" id="PF00221">
    <property type="entry name" value="Lyase_aromatic"/>
    <property type="match status" value="1"/>
</dbReference>
<dbReference type="SUPFAM" id="SSF48557">
    <property type="entry name" value="L-aspartase-like"/>
    <property type="match status" value="1"/>
</dbReference>
<dbReference type="PROSITE" id="PS00488">
    <property type="entry name" value="PAL_HISTIDASE"/>
    <property type="match status" value="1"/>
</dbReference>
<organism>
    <name type="scientific">Ipomoea batatas</name>
    <name type="common">Sweet potato</name>
    <name type="synonym">Convolvulus batatas</name>
    <dbReference type="NCBI Taxonomy" id="4120"/>
    <lineage>
        <taxon>Eukaryota</taxon>
        <taxon>Viridiplantae</taxon>
        <taxon>Streptophyta</taxon>
        <taxon>Embryophyta</taxon>
        <taxon>Tracheophyta</taxon>
        <taxon>Spermatophyta</taxon>
        <taxon>Magnoliopsida</taxon>
        <taxon>eudicotyledons</taxon>
        <taxon>Gunneridae</taxon>
        <taxon>Pentapetalae</taxon>
        <taxon>asterids</taxon>
        <taxon>lamiids</taxon>
        <taxon>Solanales</taxon>
        <taxon>Convolvulaceae</taxon>
        <taxon>Ipomoeeae</taxon>
        <taxon>Ipomoea</taxon>
    </lineage>
</organism>
<evidence type="ECO:0000250" key="1">
    <source>
        <dbReference type="UniProtKB" id="P11544"/>
    </source>
</evidence>
<evidence type="ECO:0000250" key="2">
    <source>
        <dbReference type="UniProtKB" id="P24481"/>
    </source>
</evidence>
<evidence type="ECO:0000250" key="3">
    <source>
        <dbReference type="UniProtKB" id="Q68G84"/>
    </source>
</evidence>
<evidence type="ECO:0000255" key="4">
    <source>
        <dbReference type="PROSITE-ProRule" id="PRU10122"/>
    </source>
</evidence>
<evidence type="ECO:0000305" key="5"/>
<protein>
    <recommendedName>
        <fullName>Phenylalanine ammonia-lyase</fullName>
        <ecNumber evidence="2">4.3.1.24</ecNumber>
    </recommendedName>
</protein>
<accession>Q42858</accession>
<comment type="function">
    <text evidence="2">This is a key enzyme of plant metabolism catalyzing the first reaction in the biosynthesis from L-phenylalanine of a wide variety of natural products based on the phenylpropane skeleton.</text>
</comment>
<comment type="catalytic activity">
    <reaction evidence="2">
        <text>L-phenylalanine = (E)-cinnamate + NH4(+)</text>
        <dbReference type="Rhea" id="RHEA:21384"/>
        <dbReference type="ChEBI" id="CHEBI:15669"/>
        <dbReference type="ChEBI" id="CHEBI:28938"/>
        <dbReference type="ChEBI" id="CHEBI:58095"/>
        <dbReference type="EC" id="4.3.1.24"/>
    </reaction>
</comment>
<comment type="pathway">
    <text evidence="5">Phenylpropanoid metabolism; trans-cinnamate biosynthesis; trans-cinnamate from L-phenylalanine: step 1/1.</text>
</comment>
<comment type="subunit">
    <text evidence="2">Homotetramer.</text>
</comment>
<comment type="subcellular location">
    <subcellularLocation>
        <location evidence="5">Cytoplasm</location>
    </subcellularLocation>
</comment>
<comment type="PTM">
    <text evidence="3">Contains an active site 4-methylidene-imidazol-5-one (MIO), which is formed autocatalytically by cyclization and dehydration of residues Ala-Ser-Gly.</text>
</comment>
<comment type="similarity">
    <text evidence="5">Belongs to the PAL/histidase family.</text>
</comment>
<keyword id="KW-0963">Cytoplasm</keyword>
<keyword id="KW-0456">Lyase</keyword>
<keyword id="KW-0585">Phenylalanine catabolism</keyword>
<keyword id="KW-0587">Phenylpropanoid metabolism</keyword>